<evidence type="ECO:0000255" key="1">
    <source>
        <dbReference type="HAMAP-Rule" id="MF_01959"/>
    </source>
</evidence>
<evidence type="ECO:0000256" key="2">
    <source>
        <dbReference type="SAM" id="MobiDB-lite"/>
    </source>
</evidence>
<accession>A9KWC9</accession>
<feature type="chain" id="PRO_1000088531" description="Cytochrome c-type biogenesis protein CcmE">
    <location>
        <begin position="1"/>
        <end position="162"/>
    </location>
</feature>
<feature type="topological domain" description="Cytoplasmic" evidence="1">
    <location>
        <begin position="1"/>
        <end position="8"/>
    </location>
</feature>
<feature type="transmembrane region" description="Helical; Signal-anchor for type II membrane protein" evidence="1">
    <location>
        <begin position="9"/>
        <end position="29"/>
    </location>
</feature>
<feature type="topological domain" description="Periplasmic" evidence="1">
    <location>
        <begin position="30"/>
        <end position="162"/>
    </location>
</feature>
<feature type="region of interest" description="Disordered" evidence="2">
    <location>
        <begin position="142"/>
        <end position="162"/>
    </location>
</feature>
<feature type="compositionally biased region" description="Polar residues" evidence="2">
    <location>
        <begin position="153"/>
        <end position="162"/>
    </location>
</feature>
<feature type="binding site" description="covalent" evidence="1">
    <location>
        <position position="131"/>
    </location>
    <ligand>
        <name>heme</name>
        <dbReference type="ChEBI" id="CHEBI:30413"/>
    </ligand>
</feature>
<feature type="binding site" description="axial binding residue" evidence="1">
    <location>
        <position position="135"/>
    </location>
    <ligand>
        <name>heme</name>
        <dbReference type="ChEBI" id="CHEBI:30413"/>
    </ligand>
    <ligandPart>
        <name>Fe</name>
        <dbReference type="ChEBI" id="CHEBI:18248"/>
    </ligandPart>
</feature>
<keyword id="KW-0997">Cell inner membrane</keyword>
<keyword id="KW-1003">Cell membrane</keyword>
<keyword id="KW-0201">Cytochrome c-type biogenesis</keyword>
<keyword id="KW-0349">Heme</keyword>
<keyword id="KW-0408">Iron</keyword>
<keyword id="KW-0472">Membrane</keyword>
<keyword id="KW-0479">Metal-binding</keyword>
<keyword id="KW-0735">Signal-anchor</keyword>
<keyword id="KW-0812">Transmembrane</keyword>
<keyword id="KW-1133">Transmembrane helix</keyword>
<organism>
    <name type="scientific">Shewanella baltica (strain OS195)</name>
    <dbReference type="NCBI Taxonomy" id="399599"/>
    <lineage>
        <taxon>Bacteria</taxon>
        <taxon>Pseudomonadati</taxon>
        <taxon>Pseudomonadota</taxon>
        <taxon>Gammaproteobacteria</taxon>
        <taxon>Alteromonadales</taxon>
        <taxon>Shewanellaceae</taxon>
        <taxon>Shewanella</taxon>
    </lineage>
</organism>
<gene>
    <name evidence="1" type="primary">ccmE</name>
    <name evidence="1" type="synonym">cycJ</name>
    <name type="ordered locus">Sbal195_0227</name>
</gene>
<protein>
    <recommendedName>
        <fullName evidence="1">Cytochrome c-type biogenesis protein CcmE</fullName>
    </recommendedName>
    <alternativeName>
        <fullName evidence="1">Cytochrome c maturation protein E</fullName>
    </alternativeName>
    <alternativeName>
        <fullName evidence="1">Heme chaperone CcmE</fullName>
    </alternativeName>
</protein>
<reference key="1">
    <citation type="submission" date="2007-11" db="EMBL/GenBank/DDBJ databases">
        <title>Complete sequence of chromosome of Shewanella baltica OS195.</title>
        <authorList>
            <consortium name="US DOE Joint Genome Institute"/>
            <person name="Copeland A."/>
            <person name="Lucas S."/>
            <person name="Lapidus A."/>
            <person name="Barry K."/>
            <person name="Glavina del Rio T."/>
            <person name="Dalin E."/>
            <person name="Tice H."/>
            <person name="Pitluck S."/>
            <person name="Chain P."/>
            <person name="Malfatti S."/>
            <person name="Shin M."/>
            <person name="Vergez L."/>
            <person name="Schmutz J."/>
            <person name="Larimer F."/>
            <person name="Land M."/>
            <person name="Hauser L."/>
            <person name="Kyrpides N."/>
            <person name="Kim E."/>
            <person name="Brettar I."/>
            <person name="Rodrigues J."/>
            <person name="Konstantinidis K."/>
            <person name="Klappenbach J."/>
            <person name="Hofle M."/>
            <person name="Tiedje J."/>
            <person name="Richardson P."/>
        </authorList>
    </citation>
    <scope>NUCLEOTIDE SEQUENCE [LARGE SCALE GENOMIC DNA]</scope>
    <source>
        <strain>OS195</strain>
    </source>
</reference>
<comment type="function">
    <text evidence="1">Heme chaperone required for the biogenesis of c-type cytochromes. Transiently binds heme delivered by CcmC and transfers the heme to apo-cytochromes in a process facilitated by CcmF and CcmH.</text>
</comment>
<comment type="subcellular location">
    <subcellularLocation>
        <location evidence="1">Cell inner membrane</location>
        <topology evidence="1">Single-pass type II membrane protein</topology>
        <orientation evidence="1">Periplasmic side</orientation>
    </subcellularLocation>
</comment>
<comment type="similarity">
    <text evidence="1">Belongs to the CcmE/CycJ family.</text>
</comment>
<name>CCME_SHEB9</name>
<proteinExistence type="inferred from homology"/>
<dbReference type="EMBL" id="CP000891">
    <property type="protein sequence ID" value="ABX47409.1"/>
    <property type="molecule type" value="Genomic_DNA"/>
</dbReference>
<dbReference type="RefSeq" id="WP_006079699.1">
    <property type="nucleotide sequence ID" value="NC_009997.1"/>
</dbReference>
<dbReference type="SMR" id="A9KWC9"/>
<dbReference type="GeneID" id="11770582"/>
<dbReference type="KEGG" id="sbn:Sbal195_0227"/>
<dbReference type="HOGENOM" id="CLU_079503_1_0_6"/>
<dbReference type="Proteomes" id="UP000000770">
    <property type="component" value="Chromosome"/>
</dbReference>
<dbReference type="GO" id="GO:0005886">
    <property type="term" value="C:plasma membrane"/>
    <property type="evidence" value="ECO:0007669"/>
    <property type="project" value="UniProtKB-SubCell"/>
</dbReference>
<dbReference type="GO" id="GO:0020037">
    <property type="term" value="F:heme binding"/>
    <property type="evidence" value="ECO:0007669"/>
    <property type="project" value="InterPro"/>
</dbReference>
<dbReference type="GO" id="GO:0046872">
    <property type="term" value="F:metal ion binding"/>
    <property type="evidence" value="ECO:0007669"/>
    <property type="project" value="UniProtKB-KW"/>
</dbReference>
<dbReference type="GO" id="GO:0017004">
    <property type="term" value="P:cytochrome complex assembly"/>
    <property type="evidence" value="ECO:0007669"/>
    <property type="project" value="UniProtKB-KW"/>
</dbReference>
<dbReference type="FunFam" id="2.40.50.140:FF:000104">
    <property type="entry name" value="Cytochrome c-type biogenesis protein CcmE"/>
    <property type="match status" value="1"/>
</dbReference>
<dbReference type="Gene3D" id="2.40.50.140">
    <property type="entry name" value="Nucleic acid-binding proteins"/>
    <property type="match status" value="1"/>
</dbReference>
<dbReference type="HAMAP" id="MF_01959">
    <property type="entry name" value="CcmE"/>
    <property type="match status" value="1"/>
</dbReference>
<dbReference type="InterPro" id="IPR004329">
    <property type="entry name" value="CcmE"/>
</dbReference>
<dbReference type="InterPro" id="IPR036127">
    <property type="entry name" value="CcmE-like_sf"/>
</dbReference>
<dbReference type="InterPro" id="IPR012340">
    <property type="entry name" value="NA-bd_OB-fold"/>
</dbReference>
<dbReference type="NCBIfam" id="NF009638">
    <property type="entry name" value="PRK13165.1"/>
    <property type="match status" value="1"/>
</dbReference>
<dbReference type="NCBIfam" id="NF009729">
    <property type="entry name" value="PRK13254.1-3"/>
    <property type="match status" value="1"/>
</dbReference>
<dbReference type="PANTHER" id="PTHR34128">
    <property type="entry name" value="CYTOCHROME C-TYPE BIOGENESIS PROTEIN CCME HOMOLOG, MITOCHONDRIAL"/>
    <property type="match status" value="1"/>
</dbReference>
<dbReference type="PANTHER" id="PTHR34128:SF2">
    <property type="entry name" value="CYTOCHROME C-TYPE BIOGENESIS PROTEIN CCME HOMOLOG, MITOCHONDRIAL"/>
    <property type="match status" value="1"/>
</dbReference>
<dbReference type="Pfam" id="PF03100">
    <property type="entry name" value="CcmE"/>
    <property type="match status" value="1"/>
</dbReference>
<dbReference type="SUPFAM" id="SSF82093">
    <property type="entry name" value="Heme chaperone CcmE"/>
    <property type="match status" value="1"/>
</dbReference>
<sequence>MNPRRKKRLTLAVALIGGVAAITSLLLYALNSNLNLFYTPSEIVHGKTDTGVKPEIGQRIRVGGMVTVGSMVRDPKSLHVQFAVHDSLGGEVLVTYDDLLPDLFREGQGIVAQGVLSADGKLEATEVLAKHDENYMPPEVAEAMGQKHEKLDYSQQKAPDTK</sequence>